<proteinExistence type="evidence at protein level"/>
<sequence>QHWSYGLQPG</sequence>
<dbReference type="PIR" id="A60066">
    <property type="entry name" value="RHAQ1"/>
</dbReference>
<dbReference type="GO" id="GO:0005576">
    <property type="term" value="C:extracellular region"/>
    <property type="evidence" value="ECO:0007669"/>
    <property type="project" value="UniProtKB-SubCell"/>
</dbReference>
<dbReference type="GO" id="GO:0005179">
    <property type="term" value="F:hormone activity"/>
    <property type="evidence" value="ECO:0007669"/>
    <property type="project" value="UniProtKB-KW"/>
</dbReference>
<dbReference type="InterPro" id="IPR002012">
    <property type="entry name" value="GnRH"/>
</dbReference>
<dbReference type="Pfam" id="PF00446">
    <property type="entry name" value="GnRH"/>
    <property type="match status" value="1"/>
</dbReference>
<dbReference type="PROSITE" id="PS00473">
    <property type="entry name" value="GNRH"/>
    <property type="match status" value="1"/>
</dbReference>
<evidence type="ECO:0000269" key="1">
    <source>
    </source>
</evidence>
<evidence type="ECO:0000305" key="2"/>
<reference key="1">
    <citation type="journal article" date="1991" name="Regul. Pept.">
        <title>Primary structure of two forms of gonadotropin-releasing hormone from brains of the American alligator (Alligator mississippiensis).</title>
        <authorList>
            <person name="Lovejoy D.A."/>
            <person name="Fischer W.H."/>
            <person name="Parker D.B."/>
            <person name="McRory J.E."/>
            <person name="Park M."/>
            <person name="Lance V."/>
            <person name="Swanson P."/>
            <person name="Rivier J.E."/>
            <person name="Sherwood N.M."/>
        </authorList>
    </citation>
    <scope>PROTEIN SEQUENCE</scope>
    <scope>PYROGLUTAMATE FORMATION AT GLN-1</scope>
    <scope>AMIDATION AT GLY-10</scope>
    <source>
        <tissue>Brain</tissue>
    </source>
</reference>
<accession>P37041</accession>
<accession>P20407</accession>
<name>GON1_ALLMI</name>
<keyword id="KW-0027">Amidation</keyword>
<keyword id="KW-0903">Direct protein sequencing</keyword>
<keyword id="KW-0372">Hormone</keyword>
<keyword id="KW-0873">Pyrrolidone carboxylic acid</keyword>
<keyword id="KW-0964">Secreted</keyword>
<comment type="function">
    <text>Stimulates the secretion of gonadotropins.</text>
</comment>
<comment type="subcellular location">
    <subcellularLocation>
        <location>Secreted</location>
    </subcellularLocation>
</comment>
<comment type="similarity">
    <text evidence="2">Belongs to the GnRH family.</text>
</comment>
<protein>
    <recommendedName>
        <fullName>Gonadoliberin-1</fullName>
    </recommendedName>
    <alternativeName>
        <fullName>Gonadoliberin I</fullName>
    </alternativeName>
    <alternativeName>
        <fullName>Gonadotropin-releasing hormone I</fullName>
        <shortName>GnRH-I</shortName>
    </alternativeName>
    <alternativeName>
        <fullName>LH-RH I</fullName>
    </alternativeName>
    <alternativeName>
        <fullName>Luliberin I</fullName>
    </alternativeName>
</protein>
<organism>
    <name type="scientific">Alligator mississippiensis</name>
    <name type="common">American alligator</name>
    <dbReference type="NCBI Taxonomy" id="8496"/>
    <lineage>
        <taxon>Eukaryota</taxon>
        <taxon>Metazoa</taxon>
        <taxon>Chordata</taxon>
        <taxon>Craniata</taxon>
        <taxon>Vertebrata</taxon>
        <taxon>Euteleostomi</taxon>
        <taxon>Archelosauria</taxon>
        <taxon>Archosauria</taxon>
        <taxon>Crocodylia</taxon>
        <taxon>Alligatoridae</taxon>
        <taxon>Alligatorinae</taxon>
        <taxon>Alligator</taxon>
    </lineage>
</organism>
<feature type="peptide" id="PRO_0000043947" description="Gonadoliberin-1">
    <location>
        <begin position="1"/>
        <end position="10"/>
    </location>
</feature>
<feature type="modified residue" description="Pyrrolidone carboxylic acid" evidence="1">
    <location>
        <position position="1"/>
    </location>
</feature>
<feature type="modified residue" description="Glycine amide" evidence="1">
    <location>
        <position position="10"/>
    </location>
</feature>